<reference key="1">
    <citation type="submission" date="2004-08" db="EMBL/GenBank/DDBJ databases">
        <title>Cloning and sequencing of the canine cathepsin K gene.</title>
        <authorList>
            <person name="Muir P."/>
            <person name="Argyle D.J."/>
            <person name="Manley P.A."/>
            <person name="Hao Z."/>
        </authorList>
    </citation>
    <scope>NUCLEOTIDE SEQUENCE [MRNA]</scope>
</reference>
<protein>
    <recommendedName>
        <fullName>Cathepsin K</fullName>
        <ecNumber>3.4.22.38</ecNumber>
    </recommendedName>
</protein>
<proteinExistence type="evidence at transcript level"/>
<organism>
    <name type="scientific">Canis lupus familiaris</name>
    <name type="common">Dog</name>
    <name type="synonym">Canis familiaris</name>
    <dbReference type="NCBI Taxonomy" id="9615"/>
    <lineage>
        <taxon>Eukaryota</taxon>
        <taxon>Metazoa</taxon>
        <taxon>Chordata</taxon>
        <taxon>Craniata</taxon>
        <taxon>Vertebrata</taxon>
        <taxon>Euteleostomi</taxon>
        <taxon>Mammalia</taxon>
        <taxon>Eutheria</taxon>
        <taxon>Laurasiatheria</taxon>
        <taxon>Carnivora</taxon>
        <taxon>Caniformia</taxon>
        <taxon>Canidae</taxon>
        <taxon>Canis</taxon>
    </lineage>
</organism>
<keyword id="KW-1003">Cell membrane</keyword>
<keyword id="KW-1015">Disulfide bond</keyword>
<keyword id="KW-0325">Glycoprotein</keyword>
<keyword id="KW-0378">Hydrolase</keyword>
<keyword id="KW-0458">Lysosome</keyword>
<keyword id="KW-0472">Membrane</keyword>
<keyword id="KW-0645">Protease</keyword>
<keyword id="KW-1185">Reference proteome</keyword>
<keyword id="KW-0964">Secreted</keyword>
<keyword id="KW-0732">Signal</keyword>
<keyword id="KW-0788">Thiol protease</keyword>
<keyword id="KW-0865">Zymogen</keyword>
<feature type="signal peptide" evidence="3">
    <location>
        <begin position="1"/>
        <end position="16"/>
    </location>
</feature>
<feature type="propeptide" id="PRO_0000270518" description="Activation peptide" evidence="1">
    <location>
        <begin position="17"/>
        <end position="115"/>
    </location>
</feature>
<feature type="chain" id="PRO_0000270519" description="Cathepsin K">
    <location>
        <begin position="116"/>
        <end position="330"/>
    </location>
</feature>
<feature type="active site" evidence="1">
    <location>
        <position position="140"/>
    </location>
</feature>
<feature type="active site" evidence="1">
    <location>
        <position position="277"/>
    </location>
</feature>
<feature type="active site" evidence="1">
    <location>
        <position position="297"/>
    </location>
</feature>
<feature type="glycosylation site" description="N-linked (GlcNAc...) asparagine" evidence="3">
    <location>
        <position position="104"/>
    </location>
</feature>
<feature type="disulfide bond" evidence="1">
    <location>
        <begin position="137"/>
        <end position="178"/>
    </location>
</feature>
<feature type="disulfide bond" evidence="1">
    <location>
        <begin position="171"/>
        <end position="211"/>
    </location>
</feature>
<feature type="disulfide bond" evidence="1">
    <location>
        <begin position="270"/>
        <end position="319"/>
    </location>
</feature>
<evidence type="ECO:0000250" key="1"/>
<evidence type="ECO:0000250" key="2">
    <source>
        <dbReference type="UniProtKB" id="P43235"/>
    </source>
</evidence>
<evidence type="ECO:0000255" key="3"/>
<evidence type="ECO:0000255" key="4">
    <source>
        <dbReference type="PROSITE-ProRule" id="PRU10088"/>
    </source>
</evidence>
<evidence type="ECO:0000255" key="5">
    <source>
        <dbReference type="PROSITE-ProRule" id="PRU10089"/>
    </source>
</evidence>
<evidence type="ECO:0000255" key="6">
    <source>
        <dbReference type="PROSITE-ProRule" id="PRU10090"/>
    </source>
</evidence>
<comment type="function">
    <text evidence="2">Thiol protease involved in osteoclastic bone resorption and may participate partially in the disorder of bone remodeling. Displays potent endoprotease activity against fibrinogen at acid pH. May play an important role in extracellular matrix degradation. Involved in the release of thyroid hormone thyroxine (T4) by limited proteolysis of TG/thyroglobulin in the thyroid follicle lumen.</text>
</comment>
<comment type="catalytic activity">
    <reaction>
        <text>Broad proteolytic activity. With small-molecule substrates and inhibitors, the major determinant of specificity is P2, which is preferably Leu, Met &gt; Phe, and not Arg.</text>
        <dbReference type="EC" id="3.4.22.38"/>
    </reaction>
</comment>
<comment type="subcellular location">
    <subcellularLocation>
        <location evidence="2">Lysosome</location>
    </subcellularLocation>
    <subcellularLocation>
        <location evidence="2">Secreted</location>
    </subcellularLocation>
    <subcellularLocation>
        <location evidence="2">Apical cell membrane</location>
        <topology evidence="2">Peripheral membrane protein</topology>
        <orientation evidence="2">Extracellular side</orientation>
    </subcellularLocation>
    <text evidence="2">Localizes to the lumen of thyroid follicles and to the apical membrane of thyroid epithelial cells.</text>
</comment>
<comment type="similarity">
    <text evidence="4 5 6">Belongs to the peptidase C1 family.</text>
</comment>
<accession>Q3ZKN1</accession>
<sequence length="330" mass="37061">MWGLEVLLLLPMASFALYPEEILDTQWDLWKKTYRKQYNSKVDELSRRLIWEKNLKHISIHNLEASLGVHTYELAMNHLGDMTSEEVVQKMTGLKVPPSHSRSNDTLYIPDWESRAPDSVDYRKKGYVTPVKNQGQCGSCWAFSSVGALEGQLKKKTGKLLNLSPQNLVDCVSENDGCGGGYMTNAFQYVQKNRGIDSEDAYPYVGQDESCMYNPTGKAAKCRGYREIPEGNEKALKRAVARVGPISVAIDASLTSFQFYSKGVYYDENCNSDNLNHAVLAVGYGIQKGNKHWIIKNSWGENWGNKGYILMARNKNNACGIANLASFPKM</sequence>
<gene>
    <name type="primary">CTSK</name>
</gene>
<dbReference type="EC" id="3.4.22.38"/>
<dbReference type="EMBL" id="AY738221">
    <property type="protein sequence ID" value="AAW65150.1"/>
    <property type="molecule type" value="mRNA"/>
</dbReference>
<dbReference type="RefSeq" id="NP_001029168.1">
    <property type="nucleotide sequence ID" value="NM_001033996.2"/>
</dbReference>
<dbReference type="RefSeq" id="XP_038546430.1">
    <property type="nucleotide sequence ID" value="XM_038690502.1"/>
</dbReference>
<dbReference type="SMR" id="Q3ZKN1"/>
<dbReference type="FunCoup" id="Q3ZKN1">
    <property type="interactions" value="162"/>
</dbReference>
<dbReference type="STRING" id="9615.ENSCAFP00000017808"/>
<dbReference type="BindingDB" id="Q3ZKN1"/>
<dbReference type="ChEMBL" id="CHEMBL2069160"/>
<dbReference type="MEROPS" id="C01.036"/>
<dbReference type="MEROPS" id="I29.007"/>
<dbReference type="GlyCosmos" id="Q3ZKN1">
    <property type="glycosylation" value="1 site, No reported glycans"/>
</dbReference>
<dbReference type="PaxDb" id="9612-ENSCAFP00000017808"/>
<dbReference type="Ensembl" id="ENSCAFT00000019492.6">
    <property type="protein sequence ID" value="ENSCAFP00000018081.5"/>
    <property type="gene ID" value="ENSCAFG00000012149.6"/>
</dbReference>
<dbReference type="Ensembl" id="ENSCAFT00030011860.1">
    <property type="protein sequence ID" value="ENSCAFP00030010389.1"/>
    <property type="gene ID" value="ENSCAFG00030006444.1"/>
</dbReference>
<dbReference type="Ensembl" id="ENSCAFT00040021021.1">
    <property type="protein sequence ID" value="ENSCAFP00040018251.1"/>
    <property type="gene ID" value="ENSCAFG00040011336.1"/>
</dbReference>
<dbReference type="Ensembl" id="ENSCAFT00845034366.1">
    <property type="protein sequence ID" value="ENSCAFP00845026906.1"/>
    <property type="gene ID" value="ENSCAFG00845019461.1"/>
</dbReference>
<dbReference type="GeneID" id="608843"/>
<dbReference type="KEGG" id="cfa:608843"/>
<dbReference type="CTD" id="1513"/>
<dbReference type="VEuPathDB" id="HostDB:ENSCAFG00845019461"/>
<dbReference type="VGNC" id="VGNC:57505">
    <property type="gene designation" value="ARNT"/>
</dbReference>
<dbReference type="eggNOG" id="KOG1543">
    <property type="taxonomic scope" value="Eukaryota"/>
</dbReference>
<dbReference type="GeneTree" id="ENSGT00940000157759"/>
<dbReference type="InParanoid" id="Q3ZKN1"/>
<dbReference type="OrthoDB" id="65740at2759"/>
<dbReference type="PRO" id="PR:Q3ZKN1"/>
<dbReference type="Proteomes" id="UP000002254">
    <property type="component" value="Chromosome 17"/>
</dbReference>
<dbReference type="Proteomes" id="UP000694429">
    <property type="component" value="Chromosome 17"/>
</dbReference>
<dbReference type="Proteomes" id="UP000694542">
    <property type="component" value="Chromosome 17"/>
</dbReference>
<dbReference type="Proteomes" id="UP000805418">
    <property type="component" value="Chromosome 17"/>
</dbReference>
<dbReference type="GO" id="GO:0016324">
    <property type="term" value="C:apical plasma membrane"/>
    <property type="evidence" value="ECO:0007669"/>
    <property type="project" value="UniProtKB-SubCell"/>
</dbReference>
<dbReference type="GO" id="GO:0034751">
    <property type="term" value="C:aryl hydrocarbon receptor complex"/>
    <property type="evidence" value="ECO:0000318"/>
    <property type="project" value="GO_Central"/>
</dbReference>
<dbReference type="GO" id="GO:0009897">
    <property type="term" value="C:external side of plasma membrane"/>
    <property type="evidence" value="ECO:0007669"/>
    <property type="project" value="Ensembl"/>
</dbReference>
<dbReference type="GO" id="GO:0005615">
    <property type="term" value="C:extracellular space"/>
    <property type="evidence" value="ECO:0000250"/>
    <property type="project" value="UniProtKB"/>
</dbReference>
<dbReference type="GO" id="GO:0005764">
    <property type="term" value="C:lysosome"/>
    <property type="evidence" value="ECO:0000250"/>
    <property type="project" value="UniProtKB"/>
</dbReference>
<dbReference type="GO" id="GO:0005654">
    <property type="term" value="C:nucleoplasm"/>
    <property type="evidence" value="ECO:0007669"/>
    <property type="project" value="Ensembl"/>
</dbReference>
<dbReference type="GO" id="GO:0005634">
    <property type="term" value="C:nucleus"/>
    <property type="evidence" value="ECO:0000318"/>
    <property type="project" value="GO_Central"/>
</dbReference>
<dbReference type="GO" id="GO:0005518">
    <property type="term" value="F:collagen binding"/>
    <property type="evidence" value="ECO:0007669"/>
    <property type="project" value="Ensembl"/>
</dbReference>
<dbReference type="GO" id="GO:0004197">
    <property type="term" value="F:cysteine-type endopeptidase activity"/>
    <property type="evidence" value="ECO:0007669"/>
    <property type="project" value="UniProtKB-EC"/>
</dbReference>
<dbReference type="GO" id="GO:0000981">
    <property type="term" value="F:DNA-binding transcription factor activity, RNA polymerase II-specific"/>
    <property type="evidence" value="ECO:0000318"/>
    <property type="project" value="GO_Central"/>
</dbReference>
<dbReference type="GO" id="GO:0001968">
    <property type="term" value="F:fibronectin binding"/>
    <property type="evidence" value="ECO:0007669"/>
    <property type="project" value="Ensembl"/>
</dbReference>
<dbReference type="GO" id="GO:0043394">
    <property type="term" value="F:proteoglycan binding"/>
    <property type="evidence" value="ECO:0007669"/>
    <property type="project" value="Ensembl"/>
</dbReference>
<dbReference type="GO" id="GO:0000978">
    <property type="term" value="F:RNA polymerase II cis-regulatory region sequence-specific DNA binding"/>
    <property type="evidence" value="ECO:0000318"/>
    <property type="project" value="GO_Central"/>
</dbReference>
<dbReference type="GO" id="GO:0045453">
    <property type="term" value="P:bone resorption"/>
    <property type="evidence" value="ECO:0007669"/>
    <property type="project" value="Ensembl"/>
</dbReference>
<dbReference type="GO" id="GO:0007623">
    <property type="term" value="P:circadian rhythm"/>
    <property type="evidence" value="ECO:0000318"/>
    <property type="project" value="GO_Central"/>
</dbReference>
<dbReference type="GO" id="GO:0030574">
    <property type="term" value="P:collagen catabolic process"/>
    <property type="evidence" value="ECO:0007669"/>
    <property type="project" value="Ensembl"/>
</dbReference>
<dbReference type="GO" id="GO:0061037">
    <property type="term" value="P:negative regulation of cartilage development"/>
    <property type="evidence" value="ECO:0007669"/>
    <property type="project" value="Ensembl"/>
</dbReference>
<dbReference type="GO" id="GO:0051603">
    <property type="term" value="P:proteolysis involved in protein catabolic process"/>
    <property type="evidence" value="ECO:0007669"/>
    <property type="project" value="Ensembl"/>
</dbReference>
<dbReference type="GO" id="GO:0006357">
    <property type="term" value="P:regulation of transcription by RNA polymerase II"/>
    <property type="evidence" value="ECO:0000318"/>
    <property type="project" value="GO_Central"/>
</dbReference>
<dbReference type="GO" id="GO:0006590">
    <property type="term" value="P:thyroid hormone generation"/>
    <property type="evidence" value="ECO:0000250"/>
    <property type="project" value="UniProtKB"/>
</dbReference>
<dbReference type="CDD" id="cd02248">
    <property type="entry name" value="Peptidase_C1A"/>
    <property type="match status" value="1"/>
</dbReference>
<dbReference type="FunFam" id="3.90.70.10:FF:000006">
    <property type="entry name" value="Cathepsin S"/>
    <property type="match status" value="1"/>
</dbReference>
<dbReference type="Gene3D" id="3.90.70.10">
    <property type="entry name" value="Cysteine proteinases"/>
    <property type="match status" value="1"/>
</dbReference>
<dbReference type="InterPro" id="IPR038765">
    <property type="entry name" value="Papain-like_cys_pep_sf"/>
</dbReference>
<dbReference type="InterPro" id="IPR025661">
    <property type="entry name" value="Pept_asp_AS"/>
</dbReference>
<dbReference type="InterPro" id="IPR000169">
    <property type="entry name" value="Pept_cys_AS"/>
</dbReference>
<dbReference type="InterPro" id="IPR025660">
    <property type="entry name" value="Pept_his_AS"/>
</dbReference>
<dbReference type="InterPro" id="IPR013128">
    <property type="entry name" value="Peptidase_C1A"/>
</dbReference>
<dbReference type="InterPro" id="IPR000668">
    <property type="entry name" value="Peptidase_C1A_C"/>
</dbReference>
<dbReference type="InterPro" id="IPR039417">
    <property type="entry name" value="Peptidase_C1A_papain-like"/>
</dbReference>
<dbReference type="InterPro" id="IPR013201">
    <property type="entry name" value="Prot_inhib_I29"/>
</dbReference>
<dbReference type="PANTHER" id="PTHR12411">
    <property type="entry name" value="CYSTEINE PROTEASE FAMILY C1-RELATED"/>
    <property type="match status" value="1"/>
</dbReference>
<dbReference type="Pfam" id="PF08246">
    <property type="entry name" value="Inhibitor_I29"/>
    <property type="match status" value="1"/>
</dbReference>
<dbReference type="Pfam" id="PF00112">
    <property type="entry name" value="Peptidase_C1"/>
    <property type="match status" value="1"/>
</dbReference>
<dbReference type="PRINTS" id="PR00705">
    <property type="entry name" value="PAPAIN"/>
</dbReference>
<dbReference type="SMART" id="SM00848">
    <property type="entry name" value="Inhibitor_I29"/>
    <property type="match status" value="1"/>
</dbReference>
<dbReference type="SMART" id="SM00645">
    <property type="entry name" value="Pept_C1"/>
    <property type="match status" value="1"/>
</dbReference>
<dbReference type="SUPFAM" id="SSF54001">
    <property type="entry name" value="Cysteine proteinases"/>
    <property type="match status" value="1"/>
</dbReference>
<dbReference type="PROSITE" id="PS00640">
    <property type="entry name" value="THIOL_PROTEASE_ASN"/>
    <property type="match status" value="1"/>
</dbReference>
<dbReference type="PROSITE" id="PS00139">
    <property type="entry name" value="THIOL_PROTEASE_CYS"/>
    <property type="match status" value="1"/>
</dbReference>
<dbReference type="PROSITE" id="PS00639">
    <property type="entry name" value="THIOL_PROTEASE_HIS"/>
    <property type="match status" value="1"/>
</dbReference>
<name>CATK_CANLF</name>